<name>YBJL_ECOLU</name>
<dbReference type="EMBL" id="CU928163">
    <property type="protein sequence ID" value="CAR12246.1"/>
    <property type="molecule type" value="Genomic_DNA"/>
</dbReference>
<dbReference type="RefSeq" id="WP_001024876.1">
    <property type="nucleotide sequence ID" value="NC_011751.1"/>
</dbReference>
<dbReference type="RefSeq" id="YP_002411790.1">
    <property type="nucleotide sequence ID" value="NC_011751.1"/>
</dbReference>
<dbReference type="SMR" id="B7NAJ3"/>
<dbReference type="STRING" id="585056.ECUMN_1037"/>
<dbReference type="KEGG" id="eum:ECUMN_1037"/>
<dbReference type="PATRIC" id="fig|585056.7.peg.1230"/>
<dbReference type="HOGENOM" id="CLU_035023_2_2_6"/>
<dbReference type="Proteomes" id="UP000007097">
    <property type="component" value="Chromosome"/>
</dbReference>
<dbReference type="GO" id="GO:0005886">
    <property type="term" value="C:plasma membrane"/>
    <property type="evidence" value="ECO:0007669"/>
    <property type="project" value="UniProtKB-SubCell"/>
</dbReference>
<dbReference type="GO" id="GO:0008324">
    <property type="term" value="F:monoatomic cation transmembrane transporter activity"/>
    <property type="evidence" value="ECO:0007669"/>
    <property type="project" value="InterPro"/>
</dbReference>
<dbReference type="GO" id="GO:0006813">
    <property type="term" value="P:potassium ion transport"/>
    <property type="evidence" value="ECO:0007669"/>
    <property type="project" value="InterPro"/>
</dbReference>
<dbReference type="FunFam" id="3.30.70.1450:FF:000003">
    <property type="entry name" value="Putative transport protein YbjL"/>
    <property type="match status" value="1"/>
</dbReference>
<dbReference type="Gene3D" id="3.30.70.1450">
    <property type="entry name" value="Regulator of K+ conductance, C-terminal domain"/>
    <property type="match status" value="2"/>
</dbReference>
<dbReference type="HAMAP" id="MF_01015">
    <property type="entry name" value="YbjL"/>
    <property type="match status" value="1"/>
</dbReference>
<dbReference type="InterPro" id="IPR050144">
    <property type="entry name" value="AAE_transporter"/>
</dbReference>
<dbReference type="InterPro" id="IPR006037">
    <property type="entry name" value="RCK_C"/>
</dbReference>
<dbReference type="InterPro" id="IPR036721">
    <property type="entry name" value="RCK_C_sf"/>
</dbReference>
<dbReference type="InterPro" id="IPR023017">
    <property type="entry name" value="Transp_YbjL_put"/>
</dbReference>
<dbReference type="InterPro" id="IPR006512">
    <property type="entry name" value="YidE_YbjL"/>
</dbReference>
<dbReference type="NCBIfam" id="NF003440">
    <property type="entry name" value="PRK04972.1"/>
    <property type="match status" value="1"/>
</dbReference>
<dbReference type="NCBIfam" id="TIGR01625">
    <property type="entry name" value="YidE_YbjL_dupl"/>
    <property type="match status" value="2"/>
</dbReference>
<dbReference type="PANTHER" id="PTHR30445">
    <property type="entry name" value="K(+)_H(+) ANTIPORTER SUBUNIT KHTT"/>
    <property type="match status" value="1"/>
</dbReference>
<dbReference type="PANTHER" id="PTHR30445:SF10">
    <property type="entry name" value="TRANSPORT PROTEIN YBJL-RELATED"/>
    <property type="match status" value="1"/>
</dbReference>
<dbReference type="Pfam" id="PF06826">
    <property type="entry name" value="Asp-Al_Ex"/>
    <property type="match status" value="2"/>
</dbReference>
<dbReference type="Pfam" id="PF02080">
    <property type="entry name" value="TrkA_C"/>
    <property type="match status" value="2"/>
</dbReference>
<dbReference type="SUPFAM" id="SSF116726">
    <property type="entry name" value="TrkA C-terminal domain-like"/>
    <property type="match status" value="2"/>
</dbReference>
<dbReference type="PROSITE" id="PS51202">
    <property type="entry name" value="RCK_C"/>
    <property type="match status" value="2"/>
</dbReference>
<keyword id="KW-1003">Cell membrane</keyword>
<keyword id="KW-0472">Membrane</keyword>
<keyword id="KW-0677">Repeat</keyword>
<keyword id="KW-0812">Transmembrane</keyword>
<keyword id="KW-1133">Transmembrane helix</keyword>
<keyword id="KW-0813">Transport</keyword>
<feature type="chain" id="PRO_1000135183" description="Putative transport protein YbjL">
    <location>
        <begin position="1"/>
        <end position="561"/>
    </location>
</feature>
<feature type="transmembrane region" description="Helical" evidence="1">
    <location>
        <begin position="8"/>
        <end position="28"/>
    </location>
</feature>
<feature type="transmembrane region" description="Helical" evidence="1">
    <location>
        <begin position="32"/>
        <end position="52"/>
    </location>
</feature>
<feature type="transmembrane region" description="Helical" evidence="1">
    <location>
        <begin position="66"/>
        <end position="86"/>
    </location>
</feature>
<feature type="transmembrane region" description="Helical" evidence="1">
    <location>
        <begin position="94"/>
        <end position="114"/>
    </location>
</feature>
<feature type="transmembrane region" description="Helical" evidence="1">
    <location>
        <begin position="158"/>
        <end position="178"/>
    </location>
</feature>
<feature type="transmembrane region" description="Helical" evidence="1">
    <location>
        <begin position="383"/>
        <end position="403"/>
    </location>
</feature>
<feature type="transmembrane region" description="Helical" evidence="1">
    <location>
        <begin position="406"/>
        <end position="426"/>
    </location>
</feature>
<feature type="transmembrane region" description="Helical" evidence="1">
    <location>
        <begin position="451"/>
        <end position="471"/>
    </location>
</feature>
<feature type="transmembrane region" description="Helical" evidence="1">
    <location>
        <begin position="475"/>
        <end position="495"/>
    </location>
</feature>
<feature type="transmembrane region" description="Helical" evidence="1">
    <location>
        <begin position="540"/>
        <end position="560"/>
    </location>
</feature>
<feature type="domain" description="RCK C-terminal 1" evidence="1">
    <location>
        <begin position="200"/>
        <end position="288"/>
    </location>
</feature>
<feature type="domain" description="RCK C-terminal 2" evidence="1">
    <location>
        <begin position="292"/>
        <end position="373"/>
    </location>
</feature>
<sequence>MNINVAELLNGNYILLLFVVLALGLCLGKLRLGSIQLGNSIGVLVVSLLLGQQHFSINTDALNLGFMLFIFCVGVEAGPNFFSIFFRDGKNYLMLALVMVGSALVIALGLGKLFGWDIGLTAGMLAGSMTSTPVLVGAGDTLRHSGMESRQLSLALDNLSLGYALTYLIGLVSLIVGARYLPKLQHQDLQTSAQQIARERGLDTDANRKVYLPVIRAYRVGPELVAWTDGKNLRELGIYRQTGCYIERIRRNGILANPDGDAVLQMGDEIALVGYPDAHARLDPSFRNGKEVFDRDLLDMRIVTEEVVVKNHNAVGKRLAQLKLTDHGCFLNRVIRSQIEMPIDDNVVLNKGDVLQVSGDARRVKTIADRIGFISIHSQVTDLLAFCAFFVIGLMIGMITFQFSTFSFGMGNAAGLLFAGIMLGFMRANHPTFGYIPQGALSMVKEFGLMVFMAGVGLSAGSGINNGLGAIGGQMLIAGLIVSLVPVVICFLFGAYVLRMNRALLFGAMMGARTCAPAMEIISDTARSNIPALGYAGTYAIANVLLTLAGTIIVMVWPGLG</sequence>
<comment type="subcellular location">
    <subcellularLocation>
        <location evidence="1">Cell membrane</location>
        <topology evidence="1">Multi-pass membrane protein</topology>
    </subcellularLocation>
</comment>
<comment type="similarity">
    <text evidence="1">Belongs to the AAE transporter (TC 2.A.81) family. YbjL subfamily.</text>
</comment>
<proteinExistence type="inferred from homology"/>
<accession>B7NAJ3</accession>
<gene>
    <name evidence="1" type="primary">ybjL</name>
    <name type="ordered locus">ECUMN_1037</name>
</gene>
<protein>
    <recommendedName>
        <fullName evidence="1">Putative transport protein YbjL</fullName>
    </recommendedName>
</protein>
<evidence type="ECO:0000255" key="1">
    <source>
        <dbReference type="HAMAP-Rule" id="MF_01015"/>
    </source>
</evidence>
<organism>
    <name type="scientific">Escherichia coli O17:K52:H18 (strain UMN026 / ExPEC)</name>
    <dbReference type="NCBI Taxonomy" id="585056"/>
    <lineage>
        <taxon>Bacteria</taxon>
        <taxon>Pseudomonadati</taxon>
        <taxon>Pseudomonadota</taxon>
        <taxon>Gammaproteobacteria</taxon>
        <taxon>Enterobacterales</taxon>
        <taxon>Enterobacteriaceae</taxon>
        <taxon>Escherichia</taxon>
    </lineage>
</organism>
<reference key="1">
    <citation type="journal article" date="2009" name="PLoS Genet.">
        <title>Organised genome dynamics in the Escherichia coli species results in highly diverse adaptive paths.</title>
        <authorList>
            <person name="Touchon M."/>
            <person name="Hoede C."/>
            <person name="Tenaillon O."/>
            <person name="Barbe V."/>
            <person name="Baeriswyl S."/>
            <person name="Bidet P."/>
            <person name="Bingen E."/>
            <person name="Bonacorsi S."/>
            <person name="Bouchier C."/>
            <person name="Bouvet O."/>
            <person name="Calteau A."/>
            <person name="Chiapello H."/>
            <person name="Clermont O."/>
            <person name="Cruveiller S."/>
            <person name="Danchin A."/>
            <person name="Diard M."/>
            <person name="Dossat C."/>
            <person name="Karoui M.E."/>
            <person name="Frapy E."/>
            <person name="Garry L."/>
            <person name="Ghigo J.M."/>
            <person name="Gilles A.M."/>
            <person name="Johnson J."/>
            <person name="Le Bouguenec C."/>
            <person name="Lescat M."/>
            <person name="Mangenot S."/>
            <person name="Martinez-Jehanne V."/>
            <person name="Matic I."/>
            <person name="Nassif X."/>
            <person name="Oztas S."/>
            <person name="Petit M.A."/>
            <person name="Pichon C."/>
            <person name="Rouy Z."/>
            <person name="Ruf C.S."/>
            <person name="Schneider D."/>
            <person name="Tourret J."/>
            <person name="Vacherie B."/>
            <person name="Vallenet D."/>
            <person name="Medigue C."/>
            <person name="Rocha E.P.C."/>
            <person name="Denamur E."/>
        </authorList>
    </citation>
    <scope>NUCLEOTIDE SEQUENCE [LARGE SCALE GENOMIC DNA]</scope>
    <source>
        <strain>UMN026 / ExPEC</strain>
    </source>
</reference>